<feature type="chain" id="PRO_0000220090" description="L-2,4-diaminobutyric acid acetyltransferase">
    <location>
        <begin position="1"/>
        <end position="179"/>
    </location>
</feature>
<feature type="domain" description="N-acetyltransferase" evidence="2">
    <location>
        <begin position="19"/>
        <end position="174"/>
    </location>
</feature>
<comment type="function">
    <text evidence="1">Catalyzes the acetylation of L-2,4-diaminobutyrate (DABA) to gamma-N-acetyl-alpha,gamma-diaminobutyric acid (ADABA) with acetyl coenzyme A.</text>
</comment>
<comment type="catalytic activity">
    <reaction>
        <text>L-2,4-diaminobutanoate + acetyl-CoA = (2S)-4-acetamido-2-aminobutanoate + CoA + H(+)</text>
        <dbReference type="Rhea" id="RHEA:16901"/>
        <dbReference type="ChEBI" id="CHEBI:15378"/>
        <dbReference type="ChEBI" id="CHEBI:57287"/>
        <dbReference type="ChEBI" id="CHEBI:57288"/>
        <dbReference type="ChEBI" id="CHEBI:58761"/>
        <dbReference type="ChEBI" id="CHEBI:58929"/>
        <dbReference type="EC" id="2.3.1.178"/>
    </reaction>
</comment>
<comment type="pathway">
    <text>Amine and polyamine biosynthesis; ectoine biosynthesis; L-ectoine from L-aspartate 4-semialdehyde: step 2/3.</text>
</comment>
<comment type="similarity">
    <text evidence="3">Belongs to the acetyltransferase family. EctA subfamily.</text>
</comment>
<organism>
    <name type="scientific">Streptomyces avermitilis (strain ATCC 31267 / DSM 46492 / JCM 5070 / NBRC 14893 / NCIMB 12804 / NRRL 8165 / MA-4680)</name>
    <dbReference type="NCBI Taxonomy" id="227882"/>
    <lineage>
        <taxon>Bacteria</taxon>
        <taxon>Bacillati</taxon>
        <taxon>Actinomycetota</taxon>
        <taxon>Actinomycetes</taxon>
        <taxon>Kitasatosporales</taxon>
        <taxon>Streptomycetaceae</taxon>
        <taxon>Streptomyces</taxon>
    </lineage>
</organism>
<proteinExistence type="inferred from homology"/>
<dbReference type="EC" id="2.3.1.178"/>
<dbReference type="EMBL" id="BA000030">
    <property type="protein sequence ID" value="BAC74109.1"/>
    <property type="molecule type" value="Genomic_DNA"/>
</dbReference>
<dbReference type="RefSeq" id="WP_010987798.1">
    <property type="nucleotide sequence ID" value="NZ_JZJK01000089.1"/>
</dbReference>
<dbReference type="SMR" id="Q829L3"/>
<dbReference type="GeneID" id="41543472"/>
<dbReference type="KEGG" id="sma:SAVERM_6398"/>
<dbReference type="eggNOG" id="COG0456">
    <property type="taxonomic scope" value="Bacteria"/>
</dbReference>
<dbReference type="HOGENOM" id="CLU_111896_0_0_11"/>
<dbReference type="OrthoDB" id="2436196at2"/>
<dbReference type="UniPathway" id="UPA00067">
    <property type="reaction ID" value="UER00122"/>
</dbReference>
<dbReference type="Proteomes" id="UP000000428">
    <property type="component" value="Chromosome"/>
</dbReference>
<dbReference type="GO" id="GO:0033816">
    <property type="term" value="F:diaminobutyrate acetyltransferase activity"/>
    <property type="evidence" value="ECO:0007669"/>
    <property type="project" value="UniProtKB-EC"/>
</dbReference>
<dbReference type="GO" id="GO:0019491">
    <property type="term" value="P:ectoine biosynthetic process"/>
    <property type="evidence" value="ECO:0007669"/>
    <property type="project" value="UniProtKB-UniPathway"/>
</dbReference>
<dbReference type="CDD" id="cd04301">
    <property type="entry name" value="NAT_SF"/>
    <property type="match status" value="1"/>
</dbReference>
<dbReference type="Gene3D" id="3.40.630.30">
    <property type="match status" value="1"/>
</dbReference>
<dbReference type="InterPro" id="IPR016181">
    <property type="entry name" value="Acyl_CoA_acyltransferase"/>
</dbReference>
<dbReference type="InterPro" id="IPR012772">
    <property type="entry name" value="Ectoine_EctA"/>
</dbReference>
<dbReference type="InterPro" id="IPR000182">
    <property type="entry name" value="GNAT_dom"/>
</dbReference>
<dbReference type="NCBIfam" id="TIGR02406">
    <property type="entry name" value="ectoine_EctA"/>
    <property type="match status" value="1"/>
</dbReference>
<dbReference type="Pfam" id="PF00583">
    <property type="entry name" value="Acetyltransf_1"/>
    <property type="match status" value="1"/>
</dbReference>
<dbReference type="SUPFAM" id="SSF55729">
    <property type="entry name" value="Acyl-CoA N-acyltransferases (Nat)"/>
    <property type="match status" value="1"/>
</dbReference>
<dbReference type="PROSITE" id="PS51186">
    <property type="entry name" value="GNAT"/>
    <property type="match status" value="1"/>
</dbReference>
<protein>
    <recommendedName>
        <fullName>L-2,4-diaminobutyric acid acetyltransferase</fullName>
        <shortName>DABA acetyltransferase</shortName>
        <ecNumber>2.3.1.178</ecNumber>
    </recommendedName>
</protein>
<evidence type="ECO:0000250" key="1"/>
<evidence type="ECO:0000255" key="2">
    <source>
        <dbReference type="PROSITE-ProRule" id="PRU00532"/>
    </source>
</evidence>
<evidence type="ECO:0000305" key="3"/>
<gene>
    <name type="primary">ectA</name>
    <name type="ordered locus">SAV_6398</name>
</gene>
<accession>Q829L3</accession>
<sequence length="179" mass="19622">MTAAHADLQAEFLEMPEGLRIDRPDVADGSALWRIAKDSKTLDLNSSYSYLLWCRDFAGTTAVARAADGTPVGFITAYVRPERPHTLLVWQVAVDAAYRGRGLAARMLDGLTARVTDEYGVTGIETTISPGNTASERLFTSYAQRHGADLEREVLFEAGLFPDAPHDPEVLYRIGPLSH</sequence>
<name>ECTA_STRAW</name>
<reference key="1">
    <citation type="journal article" date="2001" name="Proc. Natl. Acad. Sci. U.S.A.">
        <title>Genome sequence of an industrial microorganism Streptomyces avermitilis: deducing the ability of producing secondary metabolites.</title>
        <authorList>
            <person name="Omura S."/>
            <person name="Ikeda H."/>
            <person name="Ishikawa J."/>
            <person name="Hanamoto A."/>
            <person name="Takahashi C."/>
            <person name="Shinose M."/>
            <person name="Takahashi Y."/>
            <person name="Horikawa H."/>
            <person name="Nakazawa H."/>
            <person name="Osonoe T."/>
            <person name="Kikuchi H."/>
            <person name="Shiba T."/>
            <person name="Sakaki Y."/>
            <person name="Hattori M."/>
        </authorList>
    </citation>
    <scope>NUCLEOTIDE SEQUENCE [LARGE SCALE GENOMIC DNA]</scope>
    <source>
        <strain>ATCC 31267 / DSM 46492 / JCM 5070 / NBRC 14893 / NCIMB 12804 / NRRL 8165 / MA-4680</strain>
    </source>
</reference>
<reference key="2">
    <citation type="journal article" date="2003" name="Nat. Biotechnol.">
        <title>Complete genome sequence and comparative analysis of the industrial microorganism Streptomyces avermitilis.</title>
        <authorList>
            <person name="Ikeda H."/>
            <person name="Ishikawa J."/>
            <person name="Hanamoto A."/>
            <person name="Shinose M."/>
            <person name="Kikuchi H."/>
            <person name="Shiba T."/>
            <person name="Sakaki Y."/>
            <person name="Hattori M."/>
            <person name="Omura S."/>
        </authorList>
    </citation>
    <scope>NUCLEOTIDE SEQUENCE [LARGE SCALE GENOMIC DNA]</scope>
    <source>
        <strain>ATCC 31267 / DSM 46492 / JCM 5070 / NBRC 14893 / NCIMB 12804 / NRRL 8165 / MA-4680</strain>
    </source>
</reference>
<keyword id="KW-0012">Acyltransferase</keyword>
<keyword id="KW-1185">Reference proteome</keyword>
<keyword id="KW-0808">Transferase</keyword>